<sequence length="398" mass="43619">MSIYLTAEVPGTGGVIKATPEDFLVEEIPAYLPSGQGEHCFAVLEKRGIATLEALRRLAKALGVQERDLGYAGMKDAIGITRQTISIPRVAPEKVLALEIPGITVLSASMHGNKLRLGHLKGNRFVIRVRDVAQGAAGNAEAALEIMTRRGVPNRFGVQRYGAQGNTHEIGAAMLRREFKSAVDRLIGDPAAVTDERWRLAIEAYRRGEVAESLALFPGHFRVERELLTRLVQRPDGFERAFNSVQPRMKRLYLSAFQSSLFDLVLGKRLDSFDQVNVGDIAFKHENGACFLVQDLAAEAPRAESFEISPTGPMFGCTMMESHGAQGELEREVLAAQELTLESFNLSGGLRMEGERRPLRVPIAGAEVRQDGSDLLLDFSLPRGAYATCVLSEIMKSD</sequence>
<keyword id="KW-0413">Isomerase</keyword>
<keyword id="KW-0819">tRNA processing</keyword>
<accession>C6E4K4</accession>
<reference key="1">
    <citation type="submission" date="2009-07" db="EMBL/GenBank/DDBJ databases">
        <title>Complete sequence of Geobacter sp. M21.</title>
        <authorList>
            <consortium name="US DOE Joint Genome Institute"/>
            <person name="Lucas S."/>
            <person name="Copeland A."/>
            <person name="Lapidus A."/>
            <person name="Glavina del Rio T."/>
            <person name="Dalin E."/>
            <person name="Tice H."/>
            <person name="Bruce D."/>
            <person name="Goodwin L."/>
            <person name="Pitluck S."/>
            <person name="Saunders E."/>
            <person name="Brettin T."/>
            <person name="Detter J.C."/>
            <person name="Han C."/>
            <person name="Larimer F."/>
            <person name="Land M."/>
            <person name="Hauser L."/>
            <person name="Kyrpides N."/>
            <person name="Ovchinnikova G."/>
            <person name="Lovley D."/>
        </authorList>
    </citation>
    <scope>NUCLEOTIDE SEQUENCE [LARGE SCALE GENOMIC DNA]</scope>
    <source>
        <strain>M21</strain>
    </source>
</reference>
<name>TRUD_GEOSM</name>
<feature type="chain" id="PRO_1000213514" description="tRNA pseudouridine synthase D">
    <location>
        <begin position="1"/>
        <end position="398"/>
    </location>
</feature>
<feature type="domain" description="TRUD" evidence="1">
    <location>
        <begin position="151"/>
        <end position="361"/>
    </location>
</feature>
<feature type="active site" description="Nucleophile" evidence="1">
    <location>
        <position position="76"/>
    </location>
</feature>
<protein>
    <recommendedName>
        <fullName evidence="1">tRNA pseudouridine synthase D</fullName>
        <ecNumber evidence="1">5.4.99.27</ecNumber>
    </recommendedName>
    <alternativeName>
        <fullName evidence="1">tRNA pseudouridine(13) synthase</fullName>
    </alternativeName>
    <alternativeName>
        <fullName evidence="1">tRNA pseudouridylate synthase D</fullName>
    </alternativeName>
    <alternativeName>
        <fullName evidence="1">tRNA-uridine isomerase D</fullName>
    </alternativeName>
</protein>
<evidence type="ECO:0000255" key="1">
    <source>
        <dbReference type="HAMAP-Rule" id="MF_01082"/>
    </source>
</evidence>
<organism>
    <name type="scientific">Geobacter sp. (strain M21)</name>
    <dbReference type="NCBI Taxonomy" id="443144"/>
    <lineage>
        <taxon>Bacteria</taxon>
        <taxon>Pseudomonadati</taxon>
        <taxon>Thermodesulfobacteriota</taxon>
        <taxon>Desulfuromonadia</taxon>
        <taxon>Geobacterales</taxon>
        <taxon>Geobacteraceae</taxon>
        <taxon>Geobacter</taxon>
    </lineage>
</organism>
<dbReference type="EC" id="5.4.99.27" evidence="1"/>
<dbReference type="EMBL" id="CP001661">
    <property type="protein sequence ID" value="ACT17502.1"/>
    <property type="molecule type" value="Genomic_DNA"/>
</dbReference>
<dbReference type="SMR" id="C6E4K4"/>
<dbReference type="STRING" id="443144.GM21_1445"/>
<dbReference type="KEGG" id="gem:GM21_1445"/>
<dbReference type="eggNOG" id="COG0585">
    <property type="taxonomic scope" value="Bacteria"/>
</dbReference>
<dbReference type="HOGENOM" id="CLU_005281_4_0_7"/>
<dbReference type="OrthoDB" id="1550679at2"/>
<dbReference type="GO" id="GO:0005829">
    <property type="term" value="C:cytosol"/>
    <property type="evidence" value="ECO:0007669"/>
    <property type="project" value="TreeGrafter"/>
</dbReference>
<dbReference type="GO" id="GO:0003723">
    <property type="term" value="F:RNA binding"/>
    <property type="evidence" value="ECO:0007669"/>
    <property type="project" value="InterPro"/>
</dbReference>
<dbReference type="GO" id="GO:0160150">
    <property type="term" value="F:tRNA pseudouridine(13) synthase activity"/>
    <property type="evidence" value="ECO:0007669"/>
    <property type="project" value="UniProtKB-EC"/>
</dbReference>
<dbReference type="GO" id="GO:0031119">
    <property type="term" value="P:tRNA pseudouridine synthesis"/>
    <property type="evidence" value="ECO:0007669"/>
    <property type="project" value="UniProtKB-UniRule"/>
</dbReference>
<dbReference type="CDD" id="cd01291">
    <property type="entry name" value="PseudoU_synth"/>
    <property type="match status" value="1"/>
</dbReference>
<dbReference type="Gene3D" id="1.10.1510.30">
    <property type="match status" value="1"/>
</dbReference>
<dbReference type="Gene3D" id="3.30.70.3160">
    <property type="match status" value="1"/>
</dbReference>
<dbReference type="Gene3D" id="3.30.2350.20">
    <property type="entry name" value="TruD, catalytic domain"/>
    <property type="match status" value="1"/>
</dbReference>
<dbReference type="HAMAP" id="MF_01082">
    <property type="entry name" value="TruD"/>
    <property type="match status" value="1"/>
</dbReference>
<dbReference type="InterPro" id="IPR020103">
    <property type="entry name" value="PsdUridine_synth_cat_dom_sf"/>
</dbReference>
<dbReference type="InterPro" id="IPR001656">
    <property type="entry name" value="PsdUridine_synth_TruD"/>
</dbReference>
<dbReference type="InterPro" id="IPR020119">
    <property type="entry name" value="PsdUridine_synth_TruD_CS"/>
</dbReference>
<dbReference type="InterPro" id="IPR011760">
    <property type="entry name" value="PsdUridine_synth_TruD_insert"/>
</dbReference>
<dbReference type="InterPro" id="IPR042214">
    <property type="entry name" value="TruD_catalytic"/>
</dbReference>
<dbReference type="InterPro" id="IPR050170">
    <property type="entry name" value="TruD_pseudoU_synthase"/>
</dbReference>
<dbReference type="NCBIfam" id="TIGR00094">
    <property type="entry name" value="tRNA_TruD_broad"/>
    <property type="match status" value="1"/>
</dbReference>
<dbReference type="PANTHER" id="PTHR47811">
    <property type="entry name" value="TRNA PSEUDOURIDINE SYNTHASE D"/>
    <property type="match status" value="1"/>
</dbReference>
<dbReference type="PANTHER" id="PTHR47811:SF1">
    <property type="entry name" value="TRNA PSEUDOURIDINE SYNTHASE D"/>
    <property type="match status" value="1"/>
</dbReference>
<dbReference type="Pfam" id="PF01142">
    <property type="entry name" value="TruD"/>
    <property type="match status" value="1"/>
</dbReference>
<dbReference type="PIRSF" id="PIRSF037016">
    <property type="entry name" value="Pseudouridin_synth_euk_prd"/>
    <property type="match status" value="1"/>
</dbReference>
<dbReference type="SUPFAM" id="SSF55120">
    <property type="entry name" value="Pseudouridine synthase"/>
    <property type="match status" value="1"/>
</dbReference>
<dbReference type="PROSITE" id="PS50984">
    <property type="entry name" value="TRUD"/>
    <property type="match status" value="1"/>
</dbReference>
<dbReference type="PROSITE" id="PS01268">
    <property type="entry name" value="UPF0024"/>
    <property type="match status" value="1"/>
</dbReference>
<proteinExistence type="inferred from homology"/>
<comment type="function">
    <text evidence="1">Responsible for synthesis of pseudouridine from uracil-13 in transfer RNAs.</text>
</comment>
<comment type="catalytic activity">
    <reaction evidence="1">
        <text>uridine(13) in tRNA = pseudouridine(13) in tRNA</text>
        <dbReference type="Rhea" id="RHEA:42540"/>
        <dbReference type="Rhea" id="RHEA-COMP:10105"/>
        <dbReference type="Rhea" id="RHEA-COMP:10106"/>
        <dbReference type="ChEBI" id="CHEBI:65314"/>
        <dbReference type="ChEBI" id="CHEBI:65315"/>
        <dbReference type="EC" id="5.4.99.27"/>
    </reaction>
</comment>
<comment type="similarity">
    <text evidence="1">Belongs to the pseudouridine synthase TruD family.</text>
</comment>
<gene>
    <name evidence="1" type="primary">truD</name>
    <name type="ordered locus">GM21_1445</name>
</gene>